<feature type="chain" id="PRO_1000008858" description="Elongation factor G">
    <location>
        <begin position="1"/>
        <end position="701"/>
    </location>
</feature>
<feature type="domain" description="tr-type G">
    <location>
        <begin position="8"/>
        <end position="290"/>
    </location>
</feature>
<feature type="binding site" evidence="1">
    <location>
        <begin position="17"/>
        <end position="24"/>
    </location>
    <ligand>
        <name>GTP</name>
        <dbReference type="ChEBI" id="CHEBI:37565"/>
    </ligand>
</feature>
<feature type="binding site" evidence="1">
    <location>
        <begin position="88"/>
        <end position="92"/>
    </location>
    <ligand>
        <name>GTP</name>
        <dbReference type="ChEBI" id="CHEBI:37565"/>
    </ligand>
</feature>
<feature type="binding site" evidence="1">
    <location>
        <begin position="142"/>
        <end position="145"/>
    </location>
    <ligand>
        <name>GTP</name>
        <dbReference type="ChEBI" id="CHEBI:37565"/>
    </ligand>
</feature>
<name>EFG_NEIMF</name>
<protein>
    <recommendedName>
        <fullName evidence="1">Elongation factor G</fullName>
        <shortName evidence="1">EF-G</shortName>
    </recommendedName>
</protein>
<comment type="function">
    <text evidence="1">Catalyzes the GTP-dependent ribosomal translocation step during translation elongation. During this step, the ribosome changes from the pre-translocational (PRE) to the post-translocational (POST) state as the newly formed A-site-bound peptidyl-tRNA and P-site-bound deacylated tRNA move to the P and E sites, respectively. Catalyzes the coordinated movement of the two tRNA molecules, the mRNA and conformational changes in the ribosome.</text>
</comment>
<comment type="subcellular location">
    <subcellularLocation>
        <location evidence="1">Cytoplasm</location>
    </subcellularLocation>
</comment>
<comment type="similarity">
    <text evidence="1">Belongs to the TRAFAC class translation factor GTPase superfamily. Classic translation factor GTPase family. EF-G/EF-2 subfamily.</text>
</comment>
<evidence type="ECO:0000255" key="1">
    <source>
        <dbReference type="HAMAP-Rule" id="MF_00054"/>
    </source>
</evidence>
<proteinExistence type="inferred from homology"/>
<reference key="1">
    <citation type="journal article" date="2007" name="PLoS Genet.">
        <title>Meningococcal genetic variation mechanisms viewed through comparative analysis of serogroup C strain FAM18.</title>
        <authorList>
            <person name="Bentley S.D."/>
            <person name="Vernikos G.S."/>
            <person name="Snyder L.A.S."/>
            <person name="Churcher C."/>
            <person name="Arrowsmith C."/>
            <person name="Chillingworth T."/>
            <person name="Cronin A."/>
            <person name="Davis P.H."/>
            <person name="Holroyd N.E."/>
            <person name="Jagels K."/>
            <person name="Maddison M."/>
            <person name="Moule S."/>
            <person name="Rabbinowitsch E."/>
            <person name="Sharp S."/>
            <person name="Unwin L."/>
            <person name="Whitehead S."/>
            <person name="Quail M.A."/>
            <person name="Achtman M."/>
            <person name="Barrell B.G."/>
            <person name="Saunders N.J."/>
            <person name="Parkhill J."/>
        </authorList>
    </citation>
    <scope>NUCLEOTIDE SEQUENCE [LARGE SCALE GENOMIC DNA]</scope>
    <source>
        <strain>ATCC 700532 / DSM 15464 / FAM18</strain>
    </source>
</reference>
<sequence length="701" mass="77216">MARKTPISLYRNIGISAHIDAGKTTTTERILFYTGLTHKLGEVHDGAATTDYMEQEQERGITITSAAVTSYWSGMAKQFPEHRFNIIDTPGHVDFTVEVERSMRVLDGAVMVYCAVGGVQPQSETVWRQANKYQVPRLAFVNKMDRQGANFFRVVEQMKTRLRANPVPIVIPVGAEDNFSGVVDLLKMKSIIWNEADKGTTFTYGDIPAELVETAEEWRQNMIEAAAEASEELMDKYLGGDELTEEEIVGALRQRTLAGEIQPMLCGSAFKNKGVQRMLDAVVELLPAPTDIPPVQGVNPNTEEADSRQASDEEKFSALAFKMLNDKYVGQLTFIRVYSGVVKSGDTVLNSVKGTRERIGRLVQMTAADRTEIEEVRAGDIAAAIGLKDVTTGETLCAESAPIILERMEFPEPVIHIAVEPKTKADQEKMGIALNRLAKEDPSFRVRTDEESGQTIISGMGELHLEIIVDRMKREFGVEANIGAPQVAYRETIRKAVKAEYKHAKQSGGKGQYGHVVIEMEPMEPGGEGYEFIDEIKGGVIPREFIPSVDKGIRDTLPNGIVAGYPVVDVRIRLVFGSYHDVDSSQLAFELAASQAFKEGMRQASPALLEPIMAVEVETPEEYMGDVMGDLNRRRGVVLGMDDDGIGGKKVRAEVPLAEMFGYSTDLRSATQGRATYSMEFKKYSEAPAHIAAAVTEARKG</sequence>
<organism>
    <name type="scientific">Neisseria meningitidis serogroup C / serotype 2a (strain ATCC 700532 / DSM 15464 / FAM18)</name>
    <dbReference type="NCBI Taxonomy" id="272831"/>
    <lineage>
        <taxon>Bacteria</taxon>
        <taxon>Pseudomonadati</taxon>
        <taxon>Pseudomonadota</taxon>
        <taxon>Betaproteobacteria</taxon>
        <taxon>Neisseriales</taxon>
        <taxon>Neisseriaceae</taxon>
        <taxon>Neisseria</taxon>
    </lineage>
</organism>
<dbReference type="EMBL" id="AM421808">
    <property type="protein sequence ID" value="CAM09446.1"/>
    <property type="molecule type" value="Genomic_DNA"/>
</dbReference>
<dbReference type="RefSeq" id="WP_002215392.1">
    <property type="nucleotide sequence ID" value="NC_008767.1"/>
</dbReference>
<dbReference type="SMR" id="A1KRH0"/>
<dbReference type="GeneID" id="93387212"/>
<dbReference type="KEGG" id="nmc:NMC0127"/>
<dbReference type="HOGENOM" id="CLU_002794_4_1_4"/>
<dbReference type="Proteomes" id="UP000002286">
    <property type="component" value="Chromosome"/>
</dbReference>
<dbReference type="GO" id="GO:0005737">
    <property type="term" value="C:cytoplasm"/>
    <property type="evidence" value="ECO:0007669"/>
    <property type="project" value="UniProtKB-SubCell"/>
</dbReference>
<dbReference type="GO" id="GO:0005525">
    <property type="term" value="F:GTP binding"/>
    <property type="evidence" value="ECO:0007669"/>
    <property type="project" value="UniProtKB-UniRule"/>
</dbReference>
<dbReference type="GO" id="GO:0003924">
    <property type="term" value="F:GTPase activity"/>
    <property type="evidence" value="ECO:0007669"/>
    <property type="project" value="InterPro"/>
</dbReference>
<dbReference type="GO" id="GO:0097216">
    <property type="term" value="F:guanosine tetraphosphate binding"/>
    <property type="evidence" value="ECO:0007669"/>
    <property type="project" value="UniProtKB-ARBA"/>
</dbReference>
<dbReference type="GO" id="GO:0003746">
    <property type="term" value="F:translation elongation factor activity"/>
    <property type="evidence" value="ECO:0007669"/>
    <property type="project" value="UniProtKB-UniRule"/>
</dbReference>
<dbReference type="GO" id="GO:0032790">
    <property type="term" value="P:ribosome disassembly"/>
    <property type="evidence" value="ECO:0007669"/>
    <property type="project" value="TreeGrafter"/>
</dbReference>
<dbReference type="CDD" id="cd01886">
    <property type="entry name" value="EF-G"/>
    <property type="match status" value="1"/>
</dbReference>
<dbReference type="CDD" id="cd16262">
    <property type="entry name" value="EFG_III"/>
    <property type="match status" value="1"/>
</dbReference>
<dbReference type="CDD" id="cd01434">
    <property type="entry name" value="EFG_mtEFG1_IV"/>
    <property type="match status" value="1"/>
</dbReference>
<dbReference type="CDD" id="cd03713">
    <property type="entry name" value="EFG_mtEFG_C"/>
    <property type="match status" value="1"/>
</dbReference>
<dbReference type="CDD" id="cd04088">
    <property type="entry name" value="EFG_mtEFG_II"/>
    <property type="match status" value="1"/>
</dbReference>
<dbReference type="FunFam" id="2.40.30.10:FF:000006">
    <property type="entry name" value="Elongation factor G"/>
    <property type="match status" value="1"/>
</dbReference>
<dbReference type="FunFam" id="3.30.230.10:FF:000003">
    <property type="entry name" value="Elongation factor G"/>
    <property type="match status" value="1"/>
</dbReference>
<dbReference type="FunFam" id="3.30.70.240:FF:000001">
    <property type="entry name" value="Elongation factor G"/>
    <property type="match status" value="1"/>
</dbReference>
<dbReference type="FunFam" id="3.30.70.870:FF:000001">
    <property type="entry name" value="Elongation factor G"/>
    <property type="match status" value="1"/>
</dbReference>
<dbReference type="FunFam" id="3.40.50.300:FF:000029">
    <property type="entry name" value="Elongation factor G"/>
    <property type="match status" value="1"/>
</dbReference>
<dbReference type="Gene3D" id="3.30.230.10">
    <property type="match status" value="1"/>
</dbReference>
<dbReference type="Gene3D" id="3.30.70.240">
    <property type="match status" value="1"/>
</dbReference>
<dbReference type="Gene3D" id="3.30.70.870">
    <property type="entry name" value="Elongation Factor G (Translational Gtpase), domain 3"/>
    <property type="match status" value="1"/>
</dbReference>
<dbReference type="Gene3D" id="3.40.50.300">
    <property type="entry name" value="P-loop containing nucleotide triphosphate hydrolases"/>
    <property type="match status" value="1"/>
</dbReference>
<dbReference type="Gene3D" id="2.40.30.10">
    <property type="entry name" value="Translation factors"/>
    <property type="match status" value="1"/>
</dbReference>
<dbReference type="HAMAP" id="MF_00054_B">
    <property type="entry name" value="EF_G_EF_2_B"/>
    <property type="match status" value="1"/>
</dbReference>
<dbReference type="InterPro" id="IPR041095">
    <property type="entry name" value="EFG_II"/>
</dbReference>
<dbReference type="InterPro" id="IPR009022">
    <property type="entry name" value="EFG_III"/>
</dbReference>
<dbReference type="InterPro" id="IPR035647">
    <property type="entry name" value="EFG_III/V"/>
</dbReference>
<dbReference type="InterPro" id="IPR047872">
    <property type="entry name" value="EFG_IV"/>
</dbReference>
<dbReference type="InterPro" id="IPR035649">
    <property type="entry name" value="EFG_V"/>
</dbReference>
<dbReference type="InterPro" id="IPR000640">
    <property type="entry name" value="EFG_V-like"/>
</dbReference>
<dbReference type="InterPro" id="IPR004161">
    <property type="entry name" value="EFTu-like_2"/>
</dbReference>
<dbReference type="InterPro" id="IPR031157">
    <property type="entry name" value="G_TR_CS"/>
</dbReference>
<dbReference type="InterPro" id="IPR027417">
    <property type="entry name" value="P-loop_NTPase"/>
</dbReference>
<dbReference type="InterPro" id="IPR020568">
    <property type="entry name" value="Ribosomal_Su5_D2-typ_SF"/>
</dbReference>
<dbReference type="InterPro" id="IPR014721">
    <property type="entry name" value="Ribsml_uS5_D2-typ_fold_subgr"/>
</dbReference>
<dbReference type="InterPro" id="IPR005225">
    <property type="entry name" value="Small_GTP-bd"/>
</dbReference>
<dbReference type="InterPro" id="IPR000795">
    <property type="entry name" value="T_Tr_GTP-bd_dom"/>
</dbReference>
<dbReference type="InterPro" id="IPR009000">
    <property type="entry name" value="Transl_B-barrel_sf"/>
</dbReference>
<dbReference type="InterPro" id="IPR004540">
    <property type="entry name" value="Transl_elong_EFG/EF2"/>
</dbReference>
<dbReference type="InterPro" id="IPR005517">
    <property type="entry name" value="Transl_elong_EFG/EF2_IV"/>
</dbReference>
<dbReference type="NCBIfam" id="TIGR00484">
    <property type="entry name" value="EF-G"/>
    <property type="match status" value="1"/>
</dbReference>
<dbReference type="NCBIfam" id="NF009381">
    <property type="entry name" value="PRK12740.1-5"/>
    <property type="match status" value="1"/>
</dbReference>
<dbReference type="NCBIfam" id="TIGR00231">
    <property type="entry name" value="small_GTP"/>
    <property type="match status" value="1"/>
</dbReference>
<dbReference type="PANTHER" id="PTHR43261:SF1">
    <property type="entry name" value="RIBOSOME-RELEASING FACTOR 2, MITOCHONDRIAL"/>
    <property type="match status" value="1"/>
</dbReference>
<dbReference type="PANTHER" id="PTHR43261">
    <property type="entry name" value="TRANSLATION ELONGATION FACTOR G-RELATED"/>
    <property type="match status" value="1"/>
</dbReference>
<dbReference type="Pfam" id="PF00679">
    <property type="entry name" value="EFG_C"/>
    <property type="match status" value="1"/>
</dbReference>
<dbReference type="Pfam" id="PF14492">
    <property type="entry name" value="EFG_III"/>
    <property type="match status" value="1"/>
</dbReference>
<dbReference type="Pfam" id="PF03764">
    <property type="entry name" value="EFG_IV"/>
    <property type="match status" value="1"/>
</dbReference>
<dbReference type="Pfam" id="PF00009">
    <property type="entry name" value="GTP_EFTU"/>
    <property type="match status" value="1"/>
</dbReference>
<dbReference type="Pfam" id="PF03144">
    <property type="entry name" value="GTP_EFTU_D2"/>
    <property type="match status" value="1"/>
</dbReference>
<dbReference type="PRINTS" id="PR00315">
    <property type="entry name" value="ELONGATNFCT"/>
</dbReference>
<dbReference type="SMART" id="SM00838">
    <property type="entry name" value="EFG_C"/>
    <property type="match status" value="1"/>
</dbReference>
<dbReference type="SMART" id="SM00889">
    <property type="entry name" value="EFG_IV"/>
    <property type="match status" value="1"/>
</dbReference>
<dbReference type="SUPFAM" id="SSF54980">
    <property type="entry name" value="EF-G C-terminal domain-like"/>
    <property type="match status" value="2"/>
</dbReference>
<dbReference type="SUPFAM" id="SSF52540">
    <property type="entry name" value="P-loop containing nucleoside triphosphate hydrolases"/>
    <property type="match status" value="1"/>
</dbReference>
<dbReference type="SUPFAM" id="SSF54211">
    <property type="entry name" value="Ribosomal protein S5 domain 2-like"/>
    <property type="match status" value="1"/>
</dbReference>
<dbReference type="SUPFAM" id="SSF50447">
    <property type="entry name" value="Translation proteins"/>
    <property type="match status" value="1"/>
</dbReference>
<dbReference type="PROSITE" id="PS00301">
    <property type="entry name" value="G_TR_1"/>
    <property type="match status" value="1"/>
</dbReference>
<dbReference type="PROSITE" id="PS51722">
    <property type="entry name" value="G_TR_2"/>
    <property type="match status" value="1"/>
</dbReference>
<gene>
    <name evidence="1" type="primary">fusA</name>
    <name type="ordered locus">NMC0127</name>
</gene>
<keyword id="KW-0963">Cytoplasm</keyword>
<keyword id="KW-0251">Elongation factor</keyword>
<keyword id="KW-0342">GTP-binding</keyword>
<keyword id="KW-0547">Nucleotide-binding</keyword>
<keyword id="KW-0648">Protein biosynthesis</keyword>
<accession>A1KRH0</accession>